<proteinExistence type="inferred from homology"/>
<evidence type="ECO:0000250" key="1">
    <source>
        <dbReference type="UniProtKB" id="Q9NYV8"/>
    </source>
</evidence>
<evidence type="ECO:0000255" key="2"/>
<evidence type="ECO:0000305" key="3"/>
<sequence length="317" mass="36170">MGGVIKSIFTFVLIVEFIIGNLGNSFIALVNCIDWVKGRKISSVDRILTALAISKISLVWLIFGSWCVSVFFPALFATEKMFRMLTNIWTVINHFSVWLATGLGTFYFLKIANFSNSIFLYLKWRVKKVVLVLLLVTSVFLFLNIALINIHINASINGYRRNKTCSSDSSNFTRFSSLIVLTSTVFIFIPFTLSLAMFLLLIFSXWKHRKKMQHTVKRSGDASTKAHRGVKSVXTFFLLYAIFCLSFFISVWTSERLEENLIILSQVMGMAYPSCHSCVLILGNKKLRQASLSVLLWLRYMFKDGEPSGHKEFRESS</sequence>
<reference key="1">
    <citation type="journal article" date="2005" name="Mol. Biol. Evol.">
        <title>Evolution of bitter taste receptors in humans and apes.</title>
        <authorList>
            <person name="Fischer A."/>
            <person name="Gilad Y."/>
            <person name="Man O."/>
            <person name="Paeaebo S."/>
        </authorList>
    </citation>
    <scope>NUCLEOTIDE SEQUENCE [GENOMIC DNA]</scope>
</reference>
<dbReference type="EMBL" id="AY724880">
    <property type="protein sequence ID" value="AAU21102.1"/>
    <property type="molecule type" value="Genomic_DNA"/>
</dbReference>
<dbReference type="STRING" id="9598.ENSPTRP00000054725"/>
<dbReference type="GlyCosmos" id="Q646B7">
    <property type="glycosylation" value="3 sites, No reported glycans"/>
</dbReference>
<dbReference type="PaxDb" id="9598-ENSPTRP00000054725"/>
<dbReference type="eggNOG" id="ENOG502SKRK">
    <property type="taxonomic scope" value="Eukaryota"/>
</dbReference>
<dbReference type="InParanoid" id="Q646B7"/>
<dbReference type="Proteomes" id="UP000002277">
    <property type="component" value="Unplaced"/>
</dbReference>
<dbReference type="GO" id="GO:0016020">
    <property type="term" value="C:membrane"/>
    <property type="evidence" value="ECO:0000318"/>
    <property type="project" value="GO_Central"/>
</dbReference>
<dbReference type="GO" id="GO:0005886">
    <property type="term" value="C:plasma membrane"/>
    <property type="evidence" value="ECO:0007669"/>
    <property type="project" value="UniProtKB-ARBA"/>
</dbReference>
<dbReference type="GO" id="GO:0033038">
    <property type="term" value="F:bitter taste receptor activity"/>
    <property type="evidence" value="ECO:0000318"/>
    <property type="project" value="GO_Central"/>
</dbReference>
<dbReference type="GO" id="GO:0004930">
    <property type="term" value="F:G protein-coupled receptor activity"/>
    <property type="evidence" value="ECO:0007669"/>
    <property type="project" value="UniProtKB-KW"/>
</dbReference>
<dbReference type="GO" id="GO:0001580">
    <property type="term" value="P:detection of chemical stimulus involved in sensory perception of bitter taste"/>
    <property type="evidence" value="ECO:0000318"/>
    <property type="project" value="GO_Central"/>
</dbReference>
<dbReference type="CDD" id="cd15019">
    <property type="entry name" value="7tm_TAS2R14-like"/>
    <property type="match status" value="1"/>
</dbReference>
<dbReference type="FunFam" id="1.20.1070.10:FF:000042">
    <property type="entry name" value="Taste receptor type 2 member 7"/>
    <property type="match status" value="1"/>
</dbReference>
<dbReference type="Gene3D" id="1.20.1070.10">
    <property type="entry name" value="Rhodopsin 7-helix transmembrane proteins"/>
    <property type="match status" value="1"/>
</dbReference>
<dbReference type="InterPro" id="IPR007960">
    <property type="entry name" value="TAS2R"/>
</dbReference>
<dbReference type="PANTHER" id="PTHR11394">
    <property type="entry name" value="TASTE RECEPTOR TYPE 2"/>
    <property type="match status" value="1"/>
</dbReference>
<dbReference type="PANTHER" id="PTHR11394:SF23">
    <property type="entry name" value="TASTE RECEPTOR TYPE 2 MEMBER 14"/>
    <property type="match status" value="1"/>
</dbReference>
<dbReference type="Pfam" id="PF05296">
    <property type="entry name" value="TAS2R"/>
    <property type="match status" value="1"/>
</dbReference>
<dbReference type="SUPFAM" id="SSF81321">
    <property type="entry name" value="Family A G protein-coupled receptor-like"/>
    <property type="match status" value="1"/>
</dbReference>
<comment type="function">
    <text evidence="1">Gustducin-linked G-protein coupled receptor that plays a role in the perception of bitterness (By similarity). The activity of this receptor stimulates GNAT3, activating the gustducin G-protein pathway (By similarity). Likely plays a role in sensing the chemical composition of the gastrointestinal content and other extra-oral tissues via the inhibitory G-protein pathways (By similarity).</text>
</comment>
<comment type="catalytic activity">
    <reaction evidence="1">
        <text>Ca(2+)(in) = Ca(2+)(out)</text>
        <dbReference type="Rhea" id="RHEA:29671"/>
        <dbReference type="ChEBI" id="CHEBI:29108"/>
    </reaction>
</comment>
<comment type="catalytic activity">
    <reaction evidence="1">
        <text>3',5'-cyclic AMP(in) = 3',5'-cyclic AMP(out)</text>
        <dbReference type="Rhea" id="RHEA:76223"/>
        <dbReference type="ChEBI" id="CHEBI:58165"/>
    </reaction>
</comment>
<comment type="activity regulation">
    <text evidence="1">Basal activity is enhanced by binding to bitter tastants, such as flufenamic acid and aristolochic acid (By similarity). Regulated by cholesterol in a concentration-dependent manner (By similarity).</text>
</comment>
<comment type="subunit">
    <text evidence="1">Core component of the TAS2R14-GNAI1 complex, consisting of TAS2R14, GNAI1, GNB1 and GNG2; within the complex interacts with GNAI1 (By similarity). Core component of the TAS2R14-GNAT3 complex, consisting of TAS2R14, GNAT3, GNB1 and GNG2; within the complex interacts with GNAT3 (By similarity). Core component of the TAS2R14-GNAS2 complex, consisting of TAS2R14, GNAS2, GNB1 and GNG2; within the complex interacts with GNAS2 (By similarity).</text>
</comment>
<comment type="subcellular location">
    <subcellularLocation>
        <location>Membrane</location>
        <topology evidence="1">Multi-pass membrane protein</topology>
    </subcellularLocation>
</comment>
<comment type="miscellaneous">
    <text>Most taste cells may be activated by a limited number of bitter compounds; individual taste cells can discriminate among bitter stimuli.</text>
</comment>
<comment type="similarity">
    <text evidence="3">Belongs to the G-protein coupled receptor T2R family.</text>
</comment>
<protein>
    <recommendedName>
        <fullName>Taste receptor type 2 member 14</fullName>
        <shortName>T2R14</shortName>
    </recommendedName>
</protein>
<feature type="chain" id="PRO_0000082258" description="Taste receptor type 2 member 14">
    <location>
        <begin position="1"/>
        <end position="317"/>
    </location>
</feature>
<feature type="topological domain" description="Extracellular" evidence="1">
    <location>
        <begin position="1"/>
        <end position="7"/>
    </location>
</feature>
<feature type="transmembrane region" description="Helical; Name=1" evidence="1">
    <location>
        <begin position="8"/>
        <end position="28"/>
    </location>
</feature>
<feature type="topological domain" description="Cytoplasmic" evidence="1">
    <location>
        <begin position="29"/>
        <end position="55"/>
    </location>
</feature>
<feature type="transmembrane region" description="Helical; Name=2" evidence="1">
    <location>
        <begin position="56"/>
        <end position="76"/>
    </location>
</feature>
<feature type="topological domain" description="Extracellular" evidence="1">
    <location>
        <begin position="77"/>
        <end position="87"/>
    </location>
</feature>
<feature type="transmembrane region" description="Helical; Name=3" evidence="1">
    <location>
        <begin position="88"/>
        <end position="108"/>
    </location>
</feature>
<feature type="topological domain" description="Cytoplasmic" evidence="1">
    <location>
        <begin position="109"/>
        <end position="129"/>
    </location>
</feature>
<feature type="transmembrane region" description="Helical; Name=4" evidence="1">
    <location>
        <begin position="130"/>
        <end position="150"/>
    </location>
</feature>
<feature type="topological domain" description="Extracellular" evidence="1">
    <location>
        <begin position="151"/>
        <end position="184"/>
    </location>
</feature>
<feature type="transmembrane region" description="Helical; Name=5" evidence="1">
    <location>
        <begin position="185"/>
        <end position="205"/>
    </location>
</feature>
<feature type="topological domain" description="Cytoplasmic" evidence="1">
    <location>
        <begin position="206"/>
        <end position="232"/>
    </location>
</feature>
<feature type="transmembrane region" description="Helical; Name=6" evidence="1">
    <location>
        <begin position="233"/>
        <end position="253"/>
    </location>
</feature>
<feature type="topological domain" description="Extracellular" evidence="1">
    <location>
        <begin position="254"/>
        <end position="261"/>
    </location>
</feature>
<feature type="transmembrane region" description="Helical; Name=7" evidence="1">
    <location>
        <begin position="262"/>
        <end position="282"/>
    </location>
</feature>
<feature type="topological domain" description="Cytoplasmic" evidence="1">
    <location>
        <begin position="283"/>
        <end position="317"/>
    </location>
</feature>
<feature type="binding site" evidence="1">
    <location>
        <position position="86"/>
    </location>
    <ligand>
        <name>cholesterol</name>
        <dbReference type="ChEBI" id="CHEBI:16113"/>
    </ligand>
</feature>
<feature type="binding site" evidence="1">
    <location>
        <position position="89"/>
    </location>
    <ligand>
        <name>cholesterol</name>
        <dbReference type="ChEBI" id="CHEBI:16113"/>
    </ligand>
</feature>
<feature type="binding site" evidence="1">
    <location>
        <position position="180"/>
    </location>
    <ligand>
        <name>cholesterol</name>
        <dbReference type="ChEBI" id="CHEBI:16113"/>
    </ligand>
</feature>
<feature type="binding site" evidence="1">
    <location>
        <position position="265"/>
    </location>
    <ligand>
        <name>cholesterol</name>
        <dbReference type="ChEBI" id="CHEBI:16113"/>
    </ligand>
</feature>
<feature type="binding site" evidence="1">
    <location>
        <position position="268"/>
    </location>
    <ligand>
        <name>cholesterol</name>
        <dbReference type="ChEBI" id="CHEBI:16113"/>
    </ligand>
</feature>
<feature type="glycosylation site" description="N-linked (GlcNAc...) asparagine" evidence="2">
    <location>
        <position position="153"/>
    </location>
</feature>
<feature type="glycosylation site" description="N-linked (GlcNAc...) asparagine" evidence="2">
    <location>
        <position position="162"/>
    </location>
</feature>
<feature type="glycosylation site" description="N-linked (GlcNAc...) asparagine" evidence="2">
    <location>
        <position position="171"/>
    </location>
</feature>
<accession>Q646B7</accession>
<keyword id="KW-0297">G-protein coupled receptor</keyword>
<keyword id="KW-0325">Glycoprotein</keyword>
<keyword id="KW-0472">Membrane</keyword>
<keyword id="KW-0675">Receptor</keyword>
<keyword id="KW-1185">Reference proteome</keyword>
<keyword id="KW-0716">Sensory transduction</keyword>
<keyword id="KW-0919">Taste</keyword>
<keyword id="KW-0807">Transducer</keyword>
<keyword id="KW-0812">Transmembrane</keyword>
<keyword id="KW-1133">Transmembrane helix</keyword>
<organism>
    <name type="scientific">Pan troglodytes</name>
    <name type="common">Chimpanzee</name>
    <dbReference type="NCBI Taxonomy" id="9598"/>
    <lineage>
        <taxon>Eukaryota</taxon>
        <taxon>Metazoa</taxon>
        <taxon>Chordata</taxon>
        <taxon>Craniata</taxon>
        <taxon>Vertebrata</taxon>
        <taxon>Euteleostomi</taxon>
        <taxon>Mammalia</taxon>
        <taxon>Eutheria</taxon>
        <taxon>Euarchontoglires</taxon>
        <taxon>Primates</taxon>
        <taxon>Haplorrhini</taxon>
        <taxon>Catarrhini</taxon>
        <taxon>Hominidae</taxon>
        <taxon>Pan</taxon>
    </lineage>
</organism>
<name>T2R14_PANTR</name>
<gene>
    <name type="primary">TAS2R14</name>
</gene>